<name>BIOB_YERPY</name>
<organism>
    <name type="scientific">Yersinia pseudotuberculosis serotype O:3 (strain YPIII)</name>
    <dbReference type="NCBI Taxonomy" id="502800"/>
    <lineage>
        <taxon>Bacteria</taxon>
        <taxon>Pseudomonadati</taxon>
        <taxon>Pseudomonadota</taxon>
        <taxon>Gammaproteobacteria</taxon>
        <taxon>Enterobacterales</taxon>
        <taxon>Yersiniaceae</taxon>
        <taxon>Yersinia</taxon>
    </lineage>
</organism>
<feature type="chain" id="PRO_0000381728" description="Biotin synthase">
    <location>
        <begin position="1"/>
        <end position="345"/>
    </location>
</feature>
<feature type="domain" description="Radical SAM core" evidence="2">
    <location>
        <begin position="38"/>
        <end position="256"/>
    </location>
</feature>
<feature type="binding site" evidence="1">
    <location>
        <position position="53"/>
    </location>
    <ligand>
        <name>[4Fe-4S] cluster</name>
        <dbReference type="ChEBI" id="CHEBI:49883"/>
        <note>4Fe-4S-S-AdoMet</note>
    </ligand>
</feature>
<feature type="binding site" evidence="1">
    <location>
        <position position="57"/>
    </location>
    <ligand>
        <name>[4Fe-4S] cluster</name>
        <dbReference type="ChEBI" id="CHEBI:49883"/>
        <note>4Fe-4S-S-AdoMet</note>
    </ligand>
</feature>
<feature type="binding site" evidence="1">
    <location>
        <position position="60"/>
    </location>
    <ligand>
        <name>[4Fe-4S] cluster</name>
        <dbReference type="ChEBI" id="CHEBI:49883"/>
        <note>4Fe-4S-S-AdoMet</note>
    </ligand>
</feature>
<feature type="binding site" evidence="1">
    <location>
        <position position="97"/>
    </location>
    <ligand>
        <name>[2Fe-2S] cluster</name>
        <dbReference type="ChEBI" id="CHEBI:190135"/>
    </ligand>
</feature>
<feature type="binding site" evidence="1">
    <location>
        <position position="128"/>
    </location>
    <ligand>
        <name>[2Fe-2S] cluster</name>
        <dbReference type="ChEBI" id="CHEBI:190135"/>
    </ligand>
</feature>
<feature type="binding site" evidence="1">
    <location>
        <position position="188"/>
    </location>
    <ligand>
        <name>[2Fe-2S] cluster</name>
        <dbReference type="ChEBI" id="CHEBI:190135"/>
    </ligand>
</feature>
<feature type="binding site" evidence="1">
    <location>
        <position position="260"/>
    </location>
    <ligand>
        <name>[2Fe-2S] cluster</name>
        <dbReference type="ChEBI" id="CHEBI:190135"/>
    </ligand>
</feature>
<proteinExistence type="inferred from homology"/>
<reference key="1">
    <citation type="submission" date="2008-02" db="EMBL/GenBank/DDBJ databases">
        <title>Complete sequence of Yersinia pseudotuberculosis YPIII.</title>
        <authorList>
            <consortium name="US DOE Joint Genome Institute"/>
            <person name="Copeland A."/>
            <person name="Lucas S."/>
            <person name="Lapidus A."/>
            <person name="Glavina del Rio T."/>
            <person name="Dalin E."/>
            <person name="Tice H."/>
            <person name="Bruce D."/>
            <person name="Goodwin L."/>
            <person name="Pitluck S."/>
            <person name="Munk A.C."/>
            <person name="Brettin T."/>
            <person name="Detter J.C."/>
            <person name="Han C."/>
            <person name="Tapia R."/>
            <person name="Schmutz J."/>
            <person name="Larimer F."/>
            <person name="Land M."/>
            <person name="Hauser L."/>
            <person name="Challacombe J.F."/>
            <person name="Green L."/>
            <person name="Lindler L.E."/>
            <person name="Nikolich M.P."/>
            <person name="Richardson P."/>
        </authorList>
    </citation>
    <scope>NUCLEOTIDE SEQUENCE [LARGE SCALE GENOMIC DNA]</scope>
    <source>
        <strain>YPIII</strain>
    </source>
</reference>
<accession>B1JSS4</accession>
<protein>
    <recommendedName>
        <fullName evidence="1">Biotin synthase</fullName>
        <ecNumber evidence="1">2.8.1.6</ecNumber>
    </recommendedName>
</protein>
<evidence type="ECO:0000255" key="1">
    <source>
        <dbReference type="HAMAP-Rule" id="MF_01694"/>
    </source>
</evidence>
<evidence type="ECO:0000255" key="2">
    <source>
        <dbReference type="PROSITE-ProRule" id="PRU01266"/>
    </source>
</evidence>
<comment type="function">
    <text evidence="1">Catalyzes the conversion of dethiobiotin (DTB) to biotin by the insertion of a sulfur atom into dethiobiotin via a radical-based mechanism.</text>
</comment>
<comment type="catalytic activity">
    <reaction evidence="1">
        <text>(4R,5S)-dethiobiotin + (sulfur carrier)-SH + 2 reduced [2Fe-2S]-[ferredoxin] + 2 S-adenosyl-L-methionine = (sulfur carrier)-H + biotin + 2 5'-deoxyadenosine + 2 L-methionine + 2 oxidized [2Fe-2S]-[ferredoxin]</text>
        <dbReference type="Rhea" id="RHEA:22060"/>
        <dbReference type="Rhea" id="RHEA-COMP:10000"/>
        <dbReference type="Rhea" id="RHEA-COMP:10001"/>
        <dbReference type="Rhea" id="RHEA-COMP:14737"/>
        <dbReference type="Rhea" id="RHEA-COMP:14739"/>
        <dbReference type="ChEBI" id="CHEBI:17319"/>
        <dbReference type="ChEBI" id="CHEBI:29917"/>
        <dbReference type="ChEBI" id="CHEBI:33737"/>
        <dbReference type="ChEBI" id="CHEBI:33738"/>
        <dbReference type="ChEBI" id="CHEBI:57586"/>
        <dbReference type="ChEBI" id="CHEBI:57844"/>
        <dbReference type="ChEBI" id="CHEBI:59789"/>
        <dbReference type="ChEBI" id="CHEBI:64428"/>
        <dbReference type="ChEBI" id="CHEBI:149473"/>
        <dbReference type="EC" id="2.8.1.6"/>
    </reaction>
</comment>
<comment type="cofactor">
    <cofactor evidence="1">
        <name>[4Fe-4S] cluster</name>
        <dbReference type="ChEBI" id="CHEBI:49883"/>
    </cofactor>
    <text evidence="1">Binds 1 [4Fe-4S] cluster. The cluster is coordinated with 3 cysteines and an exchangeable S-adenosyl-L-methionine.</text>
</comment>
<comment type="cofactor">
    <cofactor evidence="1">
        <name>[2Fe-2S] cluster</name>
        <dbReference type="ChEBI" id="CHEBI:190135"/>
    </cofactor>
    <text evidence="1">Binds 1 [2Fe-2S] cluster. The cluster is coordinated with 3 cysteines and 1 arginine.</text>
</comment>
<comment type="pathway">
    <text evidence="1">Cofactor biosynthesis; biotin biosynthesis; biotin from 7,8-diaminononanoate: step 2/2.</text>
</comment>
<comment type="subunit">
    <text evidence="1">Homodimer.</text>
</comment>
<comment type="similarity">
    <text evidence="1">Belongs to the radical SAM superfamily. Biotin synthase family.</text>
</comment>
<gene>
    <name evidence="1" type="primary">bioB</name>
    <name type="ordered locus">YPK_2931</name>
</gene>
<keyword id="KW-0001">2Fe-2S</keyword>
<keyword id="KW-0004">4Fe-4S</keyword>
<keyword id="KW-0093">Biotin biosynthesis</keyword>
<keyword id="KW-0408">Iron</keyword>
<keyword id="KW-0411">Iron-sulfur</keyword>
<keyword id="KW-0479">Metal-binding</keyword>
<keyword id="KW-0949">S-adenosyl-L-methionine</keyword>
<keyword id="KW-0808">Transferase</keyword>
<sequence>MATYHHWTVGQALALFDKPLLELLFEAQQVHRQHFDPRQVQVSTLLSIKTGACPEDCKYCPQSSRYKTGLESERLMQVEQVLESAKKAKAAGSTRFCMGAAWKNPHERDMPYLAKMVEGVKALGMETCMTLGSLSKQQAHRLADAGLDYYNHNLDTSPEFYGSIITTRSYQERLDTLNEVRDAGIKVCSGGIVGLGETVRDRAGLLVQLANLPKPPESVPINMLVKVKGTPLENNAEVDAFEFIRTIAVARIMMPSSYVRLSAGREQMNEQTQAMCFMAGANSIFYGCKLLTTPNPDEDKDLQLFRKLGLNPQQTATSHGDREQQQALTEQLLHGDTAQFYNAAV</sequence>
<dbReference type="EC" id="2.8.1.6" evidence="1"/>
<dbReference type="EMBL" id="CP000950">
    <property type="protein sequence ID" value="ACA69205.1"/>
    <property type="molecule type" value="Genomic_DNA"/>
</dbReference>
<dbReference type="RefSeq" id="WP_002210762.1">
    <property type="nucleotide sequence ID" value="NZ_CP009792.1"/>
</dbReference>
<dbReference type="SMR" id="B1JSS4"/>
<dbReference type="GeneID" id="57977290"/>
<dbReference type="KEGG" id="ypy:YPK_2931"/>
<dbReference type="PATRIC" id="fig|502800.11.peg.3652"/>
<dbReference type="UniPathway" id="UPA00078">
    <property type="reaction ID" value="UER00162"/>
</dbReference>
<dbReference type="GO" id="GO:0051537">
    <property type="term" value="F:2 iron, 2 sulfur cluster binding"/>
    <property type="evidence" value="ECO:0007669"/>
    <property type="project" value="UniProtKB-KW"/>
</dbReference>
<dbReference type="GO" id="GO:0051539">
    <property type="term" value="F:4 iron, 4 sulfur cluster binding"/>
    <property type="evidence" value="ECO:0007669"/>
    <property type="project" value="UniProtKB-KW"/>
</dbReference>
<dbReference type="GO" id="GO:0004076">
    <property type="term" value="F:biotin synthase activity"/>
    <property type="evidence" value="ECO:0007669"/>
    <property type="project" value="UniProtKB-UniRule"/>
</dbReference>
<dbReference type="GO" id="GO:0005506">
    <property type="term" value="F:iron ion binding"/>
    <property type="evidence" value="ECO:0007669"/>
    <property type="project" value="UniProtKB-UniRule"/>
</dbReference>
<dbReference type="GO" id="GO:0009102">
    <property type="term" value="P:biotin biosynthetic process"/>
    <property type="evidence" value="ECO:0007669"/>
    <property type="project" value="UniProtKB-UniRule"/>
</dbReference>
<dbReference type="CDD" id="cd01335">
    <property type="entry name" value="Radical_SAM"/>
    <property type="match status" value="1"/>
</dbReference>
<dbReference type="FunFam" id="3.20.20.70:FF:000011">
    <property type="entry name" value="Biotin synthase"/>
    <property type="match status" value="1"/>
</dbReference>
<dbReference type="Gene3D" id="3.20.20.70">
    <property type="entry name" value="Aldolase class I"/>
    <property type="match status" value="1"/>
</dbReference>
<dbReference type="HAMAP" id="MF_01694">
    <property type="entry name" value="BioB"/>
    <property type="match status" value="1"/>
</dbReference>
<dbReference type="InterPro" id="IPR013785">
    <property type="entry name" value="Aldolase_TIM"/>
</dbReference>
<dbReference type="InterPro" id="IPR010722">
    <property type="entry name" value="BATS_dom"/>
</dbReference>
<dbReference type="InterPro" id="IPR002684">
    <property type="entry name" value="Biotin_synth/BioAB"/>
</dbReference>
<dbReference type="InterPro" id="IPR024177">
    <property type="entry name" value="Biotin_synthase"/>
</dbReference>
<dbReference type="InterPro" id="IPR006638">
    <property type="entry name" value="Elp3/MiaA/NifB-like_rSAM"/>
</dbReference>
<dbReference type="InterPro" id="IPR007197">
    <property type="entry name" value="rSAM"/>
</dbReference>
<dbReference type="NCBIfam" id="TIGR00433">
    <property type="entry name" value="bioB"/>
    <property type="match status" value="1"/>
</dbReference>
<dbReference type="PANTHER" id="PTHR22976">
    <property type="entry name" value="BIOTIN SYNTHASE"/>
    <property type="match status" value="1"/>
</dbReference>
<dbReference type="PANTHER" id="PTHR22976:SF2">
    <property type="entry name" value="BIOTIN SYNTHASE, MITOCHONDRIAL"/>
    <property type="match status" value="1"/>
</dbReference>
<dbReference type="Pfam" id="PF06968">
    <property type="entry name" value="BATS"/>
    <property type="match status" value="1"/>
</dbReference>
<dbReference type="Pfam" id="PF04055">
    <property type="entry name" value="Radical_SAM"/>
    <property type="match status" value="1"/>
</dbReference>
<dbReference type="PIRSF" id="PIRSF001619">
    <property type="entry name" value="Biotin_synth"/>
    <property type="match status" value="1"/>
</dbReference>
<dbReference type="SFLD" id="SFLDF00272">
    <property type="entry name" value="biotin_synthase"/>
    <property type="match status" value="1"/>
</dbReference>
<dbReference type="SFLD" id="SFLDS00029">
    <property type="entry name" value="Radical_SAM"/>
    <property type="match status" value="1"/>
</dbReference>
<dbReference type="SMART" id="SM00876">
    <property type="entry name" value="BATS"/>
    <property type="match status" value="1"/>
</dbReference>
<dbReference type="SMART" id="SM00729">
    <property type="entry name" value="Elp3"/>
    <property type="match status" value="1"/>
</dbReference>
<dbReference type="SUPFAM" id="SSF102114">
    <property type="entry name" value="Radical SAM enzymes"/>
    <property type="match status" value="1"/>
</dbReference>
<dbReference type="PROSITE" id="PS51918">
    <property type="entry name" value="RADICAL_SAM"/>
    <property type="match status" value="1"/>
</dbReference>